<accession>Q0D3F2</accession>
<accession>A3BNM6</accession>
<accession>Q69UZ9</accession>
<accession>Q9FXW5</accession>
<dbReference type="EC" id="2.5.1.43"/>
<dbReference type="EMBL" id="AP003816">
    <property type="protein sequence ID" value="BAC21363.1"/>
    <property type="molecule type" value="Genomic_DNA"/>
</dbReference>
<dbReference type="EMBL" id="AP004316">
    <property type="protein sequence ID" value="BAD30599.1"/>
    <property type="molecule type" value="Genomic_DNA"/>
</dbReference>
<dbReference type="EMBL" id="AP008213">
    <property type="protein sequence ID" value="BAF22621.1"/>
    <property type="molecule type" value="Genomic_DNA"/>
</dbReference>
<dbReference type="EMBL" id="AP014963">
    <property type="protein sequence ID" value="BAT03321.1"/>
    <property type="molecule type" value="Genomic_DNA"/>
</dbReference>
<dbReference type="EMBL" id="CM000144">
    <property type="protein sequence ID" value="EAZ41165.1"/>
    <property type="status" value="ALT_INIT"/>
    <property type="molecule type" value="Genomic_DNA"/>
</dbReference>
<dbReference type="EMBL" id="AK070656">
    <property type="status" value="NOT_ANNOTATED_CDS"/>
    <property type="molecule type" value="mRNA"/>
</dbReference>
<dbReference type="RefSeq" id="XP_015645101.1">
    <property type="nucleotide sequence ID" value="XM_015789615.1"/>
</dbReference>
<dbReference type="SMR" id="Q0D3F2"/>
<dbReference type="FunCoup" id="Q0D3F2">
    <property type="interactions" value="94"/>
</dbReference>
<dbReference type="STRING" id="39947.Q0D3F2"/>
<dbReference type="PaxDb" id="39947-Q0D3F2"/>
<dbReference type="EnsemblPlants" id="Os07t0689600-01">
    <property type="protein sequence ID" value="Os07t0689600-01"/>
    <property type="gene ID" value="Os07g0689600"/>
</dbReference>
<dbReference type="Gramene" id="Os07t0689600-01">
    <property type="protein sequence ID" value="Os07t0689600-01"/>
    <property type="gene ID" value="Os07g0689600"/>
</dbReference>
<dbReference type="KEGG" id="dosa:Os07g0689600"/>
<dbReference type="eggNOG" id="ENOG502QTU6">
    <property type="taxonomic scope" value="Eukaryota"/>
</dbReference>
<dbReference type="HOGENOM" id="CLU_031919_0_0_1"/>
<dbReference type="InParanoid" id="Q0D3F2"/>
<dbReference type="OMA" id="NIDMSPT"/>
<dbReference type="OrthoDB" id="1858069at2759"/>
<dbReference type="BRENDA" id="2.5.1.43">
    <property type="organism ID" value="4460"/>
</dbReference>
<dbReference type="PlantReactome" id="R-OSA-9025754">
    <property type="pathway name" value="Mugineic acid biosynthesis"/>
</dbReference>
<dbReference type="Proteomes" id="UP000000763">
    <property type="component" value="Chromosome 7"/>
</dbReference>
<dbReference type="Proteomes" id="UP000007752">
    <property type="component" value="Chromosome 7"/>
</dbReference>
<dbReference type="Proteomes" id="UP000059680">
    <property type="component" value="Chromosome 7"/>
</dbReference>
<dbReference type="ExpressionAtlas" id="Q0D3F2">
    <property type="expression patterns" value="baseline and differential"/>
</dbReference>
<dbReference type="GO" id="GO:0030410">
    <property type="term" value="F:nicotianamine synthase activity"/>
    <property type="evidence" value="ECO:0007669"/>
    <property type="project" value="UniProtKB-EC"/>
</dbReference>
<dbReference type="GO" id="GO:0030418">
    <property type="term" value="P:nicotianamine biosynthetic process"/>
    <property type="evidence" value="ECO:0007669"/>
    <property type="project" value="InterPro"/>
</dbReference>
<dbReference type="Gene3D" id="3.40.50.150">
    <property type="entry name" value="Vaccinia Virus protein VP39"/>
    <property type="match status" value="1"/>
</dbReference>
<dbReference type="InterPro" id="IPR004298">
    <property type="entry name" value="Nicotian_synth"/>
</dbReference>
<dbReference type="InterPro" id="IPR029063">
    <property type="entry name" value="SAM-dependent_MTases_sf"/>
</dbReference>
<dbReference type="PANTHER" id="PTHR32266">
    <property type="entry name" value="NICOTIANAMINE SYNTHASE 3"/>
    <property type="match status" value="1"/>
</dbReference>
<dbReference type="PANTHER" id="PTHR32266:SF12">
    <property type="entry name" value="NICOTIANAMINE SYNTHASE 3"/>
    <property type="match status" value="1"/>
</dbReference>
<dbReference type="Pfam" id="PF03059">
    <property type="entry name" value="NAS"/>
    <property type="match status" value="1"/>
</dbReference>
<dbReference type="SUPFAM" id="SSF53335">
    <property type="entry name" value="S-adenosyl-L-methionine-dependent methyltransferases"/>
    <property type="match status" value="1"/>
</dbReference>
<dbReference type="PROSITE" id="PS51142">
    <property type="entry name" value="NAS"/>
    <property type="match status" value="1"/>
</dbReference>
<comment type="function">
    <text evidence="1">Synthesizes nicotianamine, a polyamine that is the first intermediate in the synthesis of the phytosiderophores of the mugineic acid type found in gramineae which serve as a sensor for the physiological iron status within the plant, and/or might be involved in the transport of iron.</text>
</comment>
<comment type="catalytic activity">
    <reaction>
        <text>3 S-adenosyl-L-methionine = nicotianamine + 3 S-methyl-5'-thioadenosine + 3 H(+)</text>
        <dbReference type="Rhea" id="RHEA:16481"/>
        <dbReference type="ChEBI" id="CHEBI:15378"/>
        <dbReference type="ChEBI" id="CHEBI:17509"/>
        <dbReference type="ChEBI" id="CHEBI:58249"/>
        <dbReference type="ChEBI" id="CHEBI:59789"/>
        <dbReference type="EC" id="2.5.1.43"/>
    </reaction>
</comment>
<comment type="tissue specificity">
    <text evidence="1">Expressed in leaves.</text>
</comment>
<comment type="induction">
    <text evidence="1">By iron deficiency in roots. Down-regulated in chlorotic leaves by iron deficiency.</text>
</comment>
<comment type="similarity">
    <text evidence="2">Belongs to the nicotianamine synthase (NAS)-like family.</text>
</comment>
<comment type="sequence caution" evidence="2">
    <conflict type="erroneous initiation">
        <sequence resource="EMBL-CDS" id="EAZ41165"/>
    </conflict>
</comment>
<evidence type="ECO:0000269" key="1">
    <source>
    </source>
</evidence>
<evidence type="ECO:0000305" key="2"/>
<gene>
    <name type="primary">NAS3</name>
    <name type="ordered locus">Os07g0689600</name>
    <name type="ordered locus">LOC_Os07g48980</name>
    <name type="ORF">OJ1165_F02.29</name>
    <name type="ORF">OsJ_024648</name>
    <name type="ORF">P0597G07.112</name>
</gene>
<feature type="chain" id="PRO_0000212716" description="Nicotianamine synthase 3">
    <location>
        <begin position="1"/>
        <end position="343"/>
    </location>
</feature>
<feature type="sequence conflict" description="In Ref. 5; AK070656." evidence="2" ref="5">
    <original>E</original>
    <variation>G</variation>
    <location>
        <position position="301"/>
    </location>
</feature>
<organism>
    <name type="scientific">Oryza sativa subsp. japonica</name>
    <name type="common">Rice</name>
    <dbReference type="NCBI Taxonomy" id="39947"/>
    <lineage>
        <taxon>Eukaryota</taxon>
        <taxon>Viridiplantae</taxon>
        <taxon>Streptophyta</taxon>
        <taxon>Embryophyta</taxon>
        <taxon>Tracheophyta</taxon>
        <taxon>Spermatophyta</taxon>
        <taxon>Magnoliopsida</taxon>
        <taxon>Liliopsida</taxon>
        <taxon>Poales</taxon>
        <taxon>Poaceae</taxon>
        <taxon>BOP clade</taxon>
        <taxon>Oryzoideae</taxon>
        <taxon>Oryzeae</taxon>
        <taxon>Oryzinae</taxon>
        <taxon>Oryza</taxon>
        <taxon>Oryza sativa</taxon>
    </lineage>
</organism>
<protein>
    <recommendedName>
        <fullName>Nicotianamine synthase 3</fullName>
        <ecNumber>2.5.1.43</ecNumber>
    </recommendedName>
    <alternativeName>
        <fullName>S-adenosyl-L-methionine:S-adenosyl-L-methionine:S-adenosyl-methionine 3-amino-3-carboxypropyltransferase 3</fullName>
        <shortName>OsNAS3</shortName>
    </alternativeName>
</protein>
<reference key="1">
    <citation type="journal article" date="2005" name="Nature">
        <title>The map-based sequence of the rice genome.</title>
        <authorList>
            <consortium name="International rice genome sequencing project (IRGSP)"/>
        </authorList>
    </citation>
    <scope>NUCLEOTIDE SEQUENCE [LARGE SCALE GENOMIC DNA]</scope>
    <source>
        <strain>cv. Nipponbare</strain>
    </source>
</reference>
<reference key="2">
    <citation type="journal article" date="2008" name="Nucleic Acids Res.">
        <title>The rice annotation project database (RAP-DB): 2008 update.</title>
        <authorList>
            <consortium name="The rice annotation project (RAP)"/>
        </authorList>
    </citation>
    <scope>GENOME REANNOTATION</scope>
    <source>
        <strain>cv. Nipponbare</strain>
    </source>
</reference>
<reference key="3">
    <citation type="journal article" date="2013" name="Rice">
        <title>Improvement of the Oryza sativa Nipponbare reference genome using next generation sequence and optical map data.</title>
        <authorList>
            <person name="Kawahara Y."/>
            <person name="de la Bastide M."/>
            <person name="Hamilton J.P."/>
            <person name="Kanamori H."/>
            <person name="McCombie W.R."/>
            <person name="Ouyang S."/>
            <person name="Schwartz D.C."/>
            <person name="Tanaka T."/>
            <person name="Wu J."/>
            <person name="Zhou S."/>
            <person name="Childs K.L."/>
            <person name="Davidson R.M."/>
            <person name="Lin H."/>
            <person name="Quesada-Ocampo L."/>
            <person name="Vaillancourt B."/>
            <person name="Sakai H."/>
            <person name="Lee S.S."/>
            <person name="Kim J."/>
            <person name="Numa H."/>
            <person name="Itoh T."/>
            <person name="Buell C.R."/>
            <person name="Matsumoto T."/>
        </authorList>
    </citation>
    <scope>GENOME REANNOTATION</scope>
    <source>
        <strain>cv. Nipponbare</strain>
    </source>
</reference>
<reference key="4">
    <citation type="journal article" date="2005" name="PLoS Biol.">
        <title>The genomes of Oryza sativa: a history of duplications.</title>
        <authorList>
            <person name="Yu J."/>
            <person name="Wang J."/>
            <person name="Lin W."/>
            <person name="Li S."/>
            <person name="Li H."/>
            <person name="Zhou J."/>
            <person name="Ni P."/>
            <person name="Dong W."/>
            <person name="Hu S."/>
            <person name="Zeng C."/>
            <person name="Zhang J."/>
            <person name="Zhang Y."/>
            <person name="Li R."/>
            <person name="Xu Z."/>
            <person name="Li S."/>
            <person name="Li X."/>
            <person name="Zheng H."/>
            <person name="Cong L."/>
            <person name="Lin L."/>
            <person name="Yin J."/>
            <person name="Geng J."/>
            <person name="Li G."/>
            <person name="Shi J."/>
            <person name="Liu J."/>
            <person name="Lv H."/>
            <person name="Li J."/>
            <person name="Wang J."/>
            <person name="Deng Y."/>
            <person name="Ran L."/>
            <person name="Shi X."/>
            <person name="Wang X."/>
            <person name="Wu Q."/>
            <person name="Li C."/>
            <person name="Ren X."/>
            <person name="Wang J."/>
            <person name="Wang X."/>
            <person name="Li D."/>
            <person name="Liu D."/>
            <person name="Zhang X."/>
            <person name="Ji Z."/>
            <person name="Zhao W."/>
            <person name="Sun Y."/>
            <person name="Zhang Z."/>
            <person name="Bao J."/>
            <person name="Han Y."/>
            <person name="Dong L."/>
            <person name="Ji J."/>
            <person name="Chen P."/>
            <person name="Wu S."/>
            <person name="Liu J."/>
            <person name="Xiao Y."/>
            <person name="Bu D."/>
            <person name="Tan J."/>
            <person name="Yang L."/>
            <person name="Ye C."/>
            <person name="Zhang J."/>
            <person name="Xu J."/>
            <person name="Zhou Y."/>
            <person name="Yu Y."/>
            <person name="Zhang B."/>
            <person name="Zhuang S."/>
            <person name="Wei H."/>
            <person name="Liu B."/>
            <person name="Lei M."/>
            <person name="Yu H."/>
            <person name="Li Y."/>
            <person name="Xu H."/>
            <person name="Wei S."/>
            <person name="He X."/>
            <person name="Fang L."/>
            <person name="Zhang Z."/>
            <person name="Zhang Y."/>
            <person name="Huang X."/>
            <person name="Su Z."/>
            <person name="Tong W."/>
            <person name="Li J."/>
            <person name="Tong Z."/>
            <person name="Li S."/>
            <person name="Ye J."/>
            <person name="Wang L."/>
            <person name="Fang L."/>
            <person name="Lei T."/>
            <person name="Chen C.-S."/>
            <person name="Chen H.-C."/>
            <person name="Xu Z."/>
            <person name="Li H."/>
            <person name="Huang H."/>
            <person name="Zhang F."/>
            <person name="Xu H."/>
            <person name="Li N."/>
            <person name="Zhao C."/>
            <person name="Li S."/>
            <person name="Dong L."/>
            <person name="Huang Y."/>
            <person name="Li L."/>
            <person name="Xi Y."/>
            <person name="Qi Q."/>
            <person name="Li W."/>
            <person name="Zhang B."/>
            <person name="Hu W."/>
            <person name="Zhang Y."/>
            <person name="Tian X."/>
            <person name="Jiao Y."/>
            <person name="Liang X."/>
            <person name="Jin J."/>
            <person name="Gao L."/>
            <person name="Zheng W."/>
            <person name="Hao B."/>
            <person name="Liu S.-M."/>
            <person name="Wang W."/>
            <person name="Yuan L."/>
            <person name="Cao M."/>
            <person name="McDermott J."/>
            <person name="Samudrala R."/>
            <person name="Wang J."/>
            <person name="Wong G.K.-S."/>
            <person name="Yang H."/>
        </authorList>
    </citation>
    <scope>NUCLEOTIDE SEQUENCE [LARGE SCALE GENOMIC DNA]</scope>
    <source>
        <strain>cv. Nipponbare</strain>
    </source>
</reference>
<reference key="5">
    <citation type="journal article" date="2003" name="Science">
        <title>Collection, mapping, and annotation of over 28,000 cDNA clones from japonica rice.</title>
        <authorList>
            <consortium name="The rice full-length cDNA consortium"/>
        </authorList>
    </citation>
    <scope>NUCLEOTIDE SEQUENCE [LARGE SCALE MRNA]</scope>
    <source>
        <strain>cv. Nipponbare</strain>
    </source>
</reference>
<reference key="6">
    <citation type="journal article" date="2003" name="Plant J.">
        <title>Three rice nicotianamine synthase genes, OsNAS1, OsNAS2, and OsNAS3 are expressed in cells involved in long-distance transport of iron and differentially regulated by iron.</title>
        <authorList>
            <person name="Inoue H."/>
            <person name="Higuchi K."/>
            <person name="Takahashi M."/>
            <person name="Nakanishi H."/>
            <person name="Mori S."/>
            <person name="Nishizawa N.K."/>
        </authorList>
    </citation>
    <scope>FUNCTION</scope>
    <scope>TISSUE SPECIFICITY</scope>
    <scope>INDUCTION</scope>
</reference>
<name>NAS3_ORYSJ</name>
<sequence length="343" mass="36983">MTVEVEAVTMAKEEQPEEEEVIEKLVEKITGLAAAIGKLPSLSPSPEVNALFTELVMTCIPPSSVDVEQLGAEAQDMRGRLIRLCADAEGHLEAHYSDVLAAHDNPLDHLALFPYFNNYIQLAQLEYALLARHLPAAPPPSRLAFLGSGPLPLSSLVLAARHLPAASFHNYDICADANRRASRLVRADRDLSARMAFHTSDVAHVTTDLAAYDVVFLAALVGMAAEEKARMVEHLGKHMAPGAALVVRSAHGARGFLYPVVDPEEIRRGGFDVLAVHHPEGEVINSVIIARKPPVAAPALEGGDAHAHGHGAVVSRPCQRCEMEARAHQKMEDMSAMEKLPSS</sequence>
<keyword id="KW-1185">Reference proteome</keyword>
<keyword id="KW-0949">S-adenosyl-L-methionine</keyword>
<keyword id="KW-0808">Transferase</keyword>
<proteinExistence type="evidence at transcript level"/>